<protein>
    <recommendedName>
        <fullName evidence="1">DNA-directed RNA polymerase subunit omega</fullName>
        <shortName evidence="1">RNAP omega subunit</shortName>
        <ecNumber evidence="1">2.7.7.6</ecNumber>
    </recommendedName>
    <alternativeName>
        <fullName evidence="1">RNA polymerase omega subunit</fullName>
    </alternativeName>
    <alternativeName>
        <fullName evidence="1">Transcriptase subunit omega</fullName>
    </alternativeName>
</protein>
<dbReference type="EC" id="2.7.7.6" evidence="1"/>
<dbReference type="EMBL" id="CP000705">
    <property type="protein sequence ID" value="ABQ83432.1"/>
    <property type="molecule type" value="Genomic_DNA"/>
</dbReference>
<dbReference type="RefSeq" id="WP_003663855.1">
    <property type="nucleotide sequence ID" value="NZ_AZDD01000001.1"/>
</dbReference>
<dbReference type="SMR" id="A5VKQ8"/>
<dbReference type="STRING" id="557436.Lreu_1175"/>
<dbReference type="GeneID" id="77191844"/>
<dbReference type="KEGG" id="lre:Lreu_1175"/>
<dbReference type="PATRIC" id="fig|557436.17.peg.41"/>
<dbReference type="eggNOG" id="COG1758">
    <property type="taxonomic scope" value="Bacteria"/>
</dbReference>
<dbReference type="HOGENOM" id="CLU_125406_6_0_9"/>
<dbReference type="OMA" id="YHSAKPV"/>
<dbReference type="Proteomes" id="UP000001991">
    <property type="component" value="Chromosome"/>
</dbReference>
<dbReference type="GO" id="GO:0000428">
    <property type="term" value="C:DNA-directed RNA polymerase complex"/>
    <property type="evidence" value="ECO:0007669"/>
    <property type="project" value="UniProtKB-KW"/>
</dbReference>
<dbReference type="GO" id="GO:0003677">
    <property type="term" value="F:DNA binding"/>
    <property type="evidence" value="ECO:0007669"/>
    <property type="project" value="UniProtKB-UniRule"/>
</dbReference>
<dbReference type="GO" id="GO:0003899">
    <property type="term" value="F:DNA-directed RNA polymerase activity"/>
    <property type="evidence" value="ECO:0007669"/>
    <property type="project" value="UniProtKB-UniRule"/>
</dbReference>
<dbReference type="GO" id="GO:0006351">
    <property type="term" value="P:DNA-templated transcription"/>
    <property type="evidence" value="ECO:0007669"/>
    <property type="project" value="UniProtKB-UniRule"/>
</dbReference>
<dbReference type="Gene3D" id="3.90.940.10">
    <property type="match status" value="1"/>
</dbReference>
<dbReference type="HAMAP" id="MF_00366">
    <property type="entry name" value="RNApol_bact_RpoZ"/>
    <property type="match status" value="1"/>
</dbReference>
<dbReference type="InterPro" id="IPR003716">
    <property type="entry name" value="DNA-dir_RNA_pol_omega"/>
</dbReference>
<dbReference type="InterPro" id="IPR006110">
    <property type="entry name" value="Pol_omega/Rpo6/RPB6"/>
</dbReference>
<dbReference type="InterPro" id="IPR036161">
    <property type="entry name" value="RPB6/omega-like_sf"/>
</dbReference>
<dbReference type="NCBIfam" id="TIGR00690">
    <property type="entry name" value="rpoZ"/>
    <property type="match status" value="1"/>
</dbReference>
<dbReference type="PANTHER" id="PTHR34476">
    <property type="entry name" value="DNA-DIRECTED RNA POLYMERASE SUBUNIT OMEGA"/>
    <property type="match status" value="1"/>
</dbReference>
<dbReference type="PANTHER" id="PTHR34476:SF1">
    <property type="entry name" value="DNA-DIRECTED RNA POLYMERASE SUBUNIT OMEGA"/>
    <property type="match status" value="1"/>
</dbReference>
<dbReference type="Pfam" id="PF01192">
    <property type="entry name" value="RNA_pol_Rpb6"/>
    <property type="match status" value="1"/>
</dbReference>
<dbReference type="SMART" id="SM01409">
    <property type="entry name" value="RNA_pol_Rpb6"/>
    <property type="match status" value="1"/>
</dbReference>
<dbReference type="SUPFAM" id="SSF63562">
    <property type="entry name" value="RPB6/omega subunit-like"/>
    <property type="match status" value="1"/>
</dbReference>
<evidence type="ECO:0000255" key="1">
    <source>
        <dbReference type="HAMAP-Rule" id="MF_00366"/>
    </source>
</evidence>
<keyword id="KW-0240">DNA-directed RNA polymerase</keyword>
<keyword id="KW-0548">Nucleotidyltransferase</keyword>
<keyword id="KW-1185">Reference proteome</keyword>
<keyword id="KW-0804">Transcription</keyword>
<keyword id="KW-0808">Transferase</keyword>
<comment type="function">
    <text evidence="1">Promotes RNA polymerase assembly. Latches the N- and C-terminal regions of the beta' subunit thereby facilitating its interaction with the beta and alpha subunits.</text>
</comment>
<comment type="catalytic activity">
    <reaction evidence="1">
        <text>RNA(n) + a ribonucleoside 5'-triphosphate = RNA(n+1) + diphosphate</text>
        <dbReference type="Rhea" id="RHEA:21248"/>
        <dbReference type="Rhea" id="RHEA-COMP:14527"/>
        <dbReference type="Rhea" id="RHEA-COMP:17342"/>
        <dbReference type="ChEBI" id="CHEBI:33019"/>
        <dbReference type="ChEBI" id="CHEBI:61557"/>
        <dbReference type="ChEBI" id="CHEBI:140395"/>
        <dbReference type="EC" id="2.7.7.6"/>
    </reaction>
</comment>
<comment type="subunit">
    <text evidence="1">The RNAP catalytic core consists of 2 alpha, 1 beta, 1 beta' and 1 omega subunit. When a sigma factor is associated with the core the holoenzyme is formed, which can initiate transcription.</text>
</comment>
<comment type="similarity">
    <text evidence="1">Belongs to the RNA polymerase subunit omega family.</text>
</comment>
<accession>A5VKQ8</accession>
<organism>
    <name type="scientific">Limosilactobacillus reuteri (strain DSM 20016)</name>
    <name type="common">Lactobacillus reuteri</name>
    <dbReference type="NCBI Taxonomy" id="557436"/>
    <lineage>
        <taxon>Bacteria</taxon>
        <taxon>Bacillati</taxon>
        <taxon>Bacillota</taxon>
        <taxon>Bacilli</taxon>
        <taxon>Lactobacillales</taxon>
        <taxon>Lactobacillaceae</taxon>
        <taxon>Limosilactobacillus</taxon>
    </lineage>
</organism>
<gene>
    <name evidence="1" type="primary">rpoZ</name>
    <name type="ordered locus">Lreu_1175</name>
</gene>
<sequence>MILFPSVDELLKHIDSRYSLVMLASKRANELDAGAAPLLEHYDSSKSVGKALEEILAGKVTIDPDHTEDLQD</sequence>
<feature type="chain" id="PRO_1000121239" description="DNA-directed RNA polymerase subunit omega">
    <location>
        <begin position="1"/>
        <end position="72"/>
    </location>
</feature>
<name>RPOZ_LIMRD</name>
<reference key="1">
    <citation type="journal article" date="2011" name="PLoS Genet.">
        <title>The evolution of host specialization in the vertebrate gut symbiont Lactobacillus reuteri.</title>
        <authorList>
            <person name="Frese S.A."/>
            <person name="Benson A.K."/>
            <person name="Tannock G.W."/>
            <person name="Loach D.M."/>
            <person name="Kim J."/>
            <person name="Zhang M."/>
            <person name="Oh P.L."/>
            <person name="Heng N.C."/>
            <person name="Patil P.B."/>
            <person name="Juge N."/>
            <person name="Mackenzie D.A."/>
            <person name="Pearson B.M."/>
            <person name="Lapidus A."/>
            <person name="Dalin E."/>
            <person name="Tice H."/>
            <person name="Goltsman E."/>
            <person name="Land M."/>
            <person name="Hauser L."/>
            <person name="Ivanova N."/>
            <person name="Kyrpides N.C."/>
            <person name="Walter J."/>
        </authorList>
    </citation>
    <scope>NUCLEOTIDE SEQUENCE [LARGE SCALE GENOMIC DNA]</scope>
    <source>
        <strain>DSM 20016</strain>
    </source>
</reference>
<proteinExistence type="inferred from homology"/>